<evidence type="ECO:0000255" key="1"/>
<evidence type="ECO:0000269" key="2">
    <source>
    </source>
</evidence>
<evidence type="ECO:0000269" key="3">
    <source>
    </source>
</evidence>
<evidence type="ECO:0000303" key="4">
    <source>
    </source>
</evidence>
<evidence type="ECO:0000305" key="5">
    <source>
    </source>
</evidence>
<organism>
    <name type="scientific">Aspergillus flavus (strain ATCC 200026 / FGSC A1120 / IAM 13836 / NRRL 3357 / JCM 12722 / SRRC 167)</name>
    <dbReference type="NCBI Taxonomy" id="332952"/>
    <lineage>
        <taxon>Eukaryota</taxon>
        <taxon>Fungi</taxon>
        <taxon>Dikarya</taxon>
        <taxon>Ascomycota</taxon>
        <taxon>Pezizomycotina</taxon>
        <taxon>Eurotiomycetes</taxon>
        <taxon>Eurotiomycetidae</taxon>
        <taxon>Eurotiales</taxon>
        <taxon>Aspergillaceae</taxon>
        <taxon>Aspergillus</taxon>
        <taxon>Aspergillus subgen. Circumdati</taxon>
    </lineage>
</organism>
<proteinExistence type="inferred from homology"/>
<sequence length="277" mass="33111">MHLSRYIAVLLSASSFVSALPLQNDVISDDGSKPIDAIMATAMEHKVVNPENLDATPATPENPEDLDKRFYYTGYKRNAETPEDLDKRFYYTGYKRNAETPEDLDKRFYYTGYKRNAETPEDLDKRFYYTGYKRNAETPEDLDKRFYYTGYKRNAETPEDLDKRFYYTGYKRNAETPDDLDKRFYYTGYKRNAETPDDLDKRFYYTGYKRNAETPEDLDKRFYYTGYKRNAETPEDLDKRFYYTGYKRNAETPEDLDKRFYYTGYKRNAETPEDLDK</sequence>
<keyword id="KW-0732">Signal</keyword>
<accession>B8NCQ5</accession>
<feature type="signal peptide" evidence="1">
    <location>
        <begin position="1"/>
        <end position="19"/>
    </location>
</feature>
<feature type="propeptide" id="PRO_0000458357" evidence="5">
    <location>
        <begin position="20"/>
        <end position="69"/>
    </location>
</feature>
<feature type="peptide" id="PRO_5036279715" description="FYYTGY-I" evidence="5">
    <location>
        <begin position="70"/>
        <end position="75"/>
    </location>
</feature>
<feature type="propeptide" id="PRO_0000458358" evidence="5">
    <location>
        <begin position="76"/>
        <end position="88"/>
    </location>
</feature>
<feature type="peptide" id="PRO_0000458359" description="FYYTGY-II" evidence="5">
    <location>
        <begin position="89"/>
        <end position="94"/>
    </location>
</feature>
<feature type="propeptide" id="PRO_0000458360" evidence="5">
    <location>
        <begin position="95"/>
        <end position="107"/>
    </location>
</feature>
<feature type="peptide" id="PRO_0000458361" description="FYYTGY-III" evidence="5">
    <location>
        <begin position="108"/>
        <end position="113"/>
    </location>
</feature>
<feature type="propeptide" id="PRO_0000458362" evidence="5">
    <location>
        <begin position="114"/>
        <end position="126"/>
    </location>
</feature>
<feature type="peptide" id="PRO_0000458363" description="FYYTGY-IV" evidence="5">
    <location>
        <begin position="127"/>
        <end position="132"/>
    </location>
</feature>
<feature type="propeptide" id="PRO_0000458364" evidence="5">
    <location>
        <begin position="133"/>
        <end position="145"/>
    </location>
</feature>
<feature type="peptide" id="PRO_0000458365" description="FYYTGY-V" evidence="5">
    <location>
        <begin position="146"/>
        <end position="151"/>
    </location>
</feature>
<feature type="propeptide" id="PRO_0000458366" evidence="5">
    <location>
        <begin position="152"/>
        <end position="164"/>
    </location>
</feature>
<feature type="peptide" id="PRO_0000458367" description="FYYTGY-VI" evidence="5">
    <location>
        <begin position="165"/>
        <end position="170"/>
    </location>
</feature>
<feature type="propeptide" id="PRO_0000458368" evidence="5">
    <location>
        <begin position="171"/>
        <end position="183"/>
    </location>
</feature>
<feature type="peptide" id="PRO_0000458369" description="FYYTGY-VII" evidence="5">
    <location>
        <begin position="184"/>
        <end position="189"/>
    </location>
</feature>
<feature type="propeptide" id="PRO_0000458370" evidence="5">
    <location>
        <begin position="190"/>
        <end position="202"/>
    </location>
</feature>
<feature type="peptide" id="PRO_0000458371" description="FYYTGY-VIII" evidence="5">
    <location>
        <begin position="203"/>
        <end position="208"/>
    </location>
</feature>
<feature type="propeptide" id="PRO_0000458372" evidence="5">
    <location>
        <begin position="209"/>
        <end position="221"/>
    </location>
</feature>
<feature type="peptide" id="PRO_0000458373" description="FYYTGY-IX" evidence="5">
    <location>
        <begin position="222"/>
        <end position="227"/>
    </location>
</feature>
<feature type="propeptide" id="PRO_0000458374" evidence="5">
    <location>
        <begin position="228"/>
        <end position="240"/>
    </location>
</feature>
<feature type="peptide" id="PRO_0000458375" description="FYYTGY-X" evidence="5">
    <location>
        <begin position="241"/>
        <end position="246"/>
    </location>
</feature>
<feature type="propeptide" id="PRO_0000458376" evidence="5">
    <location>
        <begin position="247"/>
        <end position="259"/>
    </location>
</feature>
<feature type="peptide" id="PRO_0000458377" description="FYYTGY-XI" evidence="5">
    <location>
        <begin position="260"/>
        <end position="265"/>
    </location>
</feature>
<feature type="propeptide" id="PRO_0000458378" evidence="5">
    <location>
        <begin position="266"/>
        <end position="277"/>
    </location>
</feature>
<dbReference type="EMBL" id="EQ963476">
    <property type="protein sequence ID" value="EED52438.1"/>
    <property type="molecule type" value="Genomic_DNA"/>
</dbReference>
<dbReference type="EMBL" id="CP059872">
    <property type="protein sequence ID" value="QMW35053.1"/>
    <property type="molecule type" value="Genomic_DNA"/>
</dbReference>
<dbReference type="RefSeq" id="XP_002377602.1">
    <property type="nucleotide sequence ID" value="XM_002377561.1"/>
</dbReference>
<dbReference type="STRING" id="332952.B8NCQ5"/>
<dbReference type="EnsemblFungi" id="EED52438">
    <property type="protein sequence ID" value="EED52438"/>
    <property type="gene ID" value="AFLA_041400"/>
</dbReference>
<dbReference type="VEuPathDB" id="FungiDB:AFLA_007704"/>
<dbReference type="eggNOG" id="ENOG502QUR8">
    <property type="taxonomic scope" value="Eukaryota"/>
</dbReference>
<dbReference type="HOGENOM" id="CLU_1004629_0_0_1"/>
<dbReference type="OMA" id="IMRYSAY"/>
<name>APRA_ASPFN</name>
<gene>
    <name evidence="4" type="primary">aprA</name>
    <name type="ORF">AFLA_041400</name>
    <name type="ORF">G4B84_010544</name>
</gene>
<reference key="1">
    <citation type="journal article" date="2015" name="Genome Announc.">
        <title>Genome sequence of Aspergillus flavus NRRL 3357, a strain that causes aflatoxin contamination of food and feed.</title>
        <authorList>
            <person name="Nierman W.C."/>
            <person name="Yu J."/>
            <person name="Fedorova-Abrams N.D."/>
            <person name="Losada L."/>
            <person name="Cleveland T.E."/>
            <person name="Bhatnagar D."/>
            <person name="Bennett J.W."/>
            <person name="Dean R."/>
            <person name="Payne G.A."/>
        </authorList>
    </citation>
    <scope>NUCLEOTIDE SEQUENCE [LARGE SCALE GENOMIC DNA]</scope>
    <source>
        <strain>ATCC 200026 / FGSC A1120 / IAM 13836 / NRRL 3357 / JCM 12722 / SRRC 167</strain>
    </source>
</reference>
<reference key="2">
    <citation type="submission" date="2020-07" db="EMBL/GenBank/DDBJ databases">
        <title>Two New Chromosome-Level Aspergillus flavus Reference Genomes Reveal a Large Insertion Potentially Contributing to Isolate Stress Tolerance and Aflatoxin Production.</title>
        <authorList>
            <person name="Fountain J.C."/>
            <person name="Clevenger J.P."/>
            <person name="Nadon B."/>
            <person name="Youngblood R.C."/>
            <person name="Korani W."/>
            <person name="Chang P.-K."/>
            <person name="Starr D."/>
            <person name="Wang H."/>
            <person name="Isett B."/>
            <person name="Johnston H.R."/>
            <person name="Wiggins R."/>
            <person name="Chu Y."/>
            <person name="Agarwal G."/>
            <person name="Kemerait R.C."/>
            <person name="Pandey M.K."/>
            <person name="Bhatnagar D."/>
            <person name="Ozias-Akins P."/>
            <person name="Varshney R.K."/>
            <person name="Scheffler B.E."/>
            <person name="Vaughn J.N."/>
            <person name="Guo B."/>
        </authorList>
    </citation>
    <scope>NUCLEOTIDE SEQUENCE [LARGE SCALE GENOMIC DNA]</scope>
    <source>
        <strain>ATCC 200026 / FGSC A1120 / IAM 13836 / NRRL 3357 / JCM 12722 / SRRC 167</strain>
    </source>
</reference>
<reference key="3">
    <citation type="journal article" date="2016" name="Fungal Genet. Biol.">
        <title>Class of cyclic ribosomal peptide synthetic genes in filamentous fungi.</title>
        <authorList>
            <person name="Nagano N."/>
            <person name="Umemura M."/>
            <person name="Izumikawa M."/>
            <person name="Kawano J."/>
            <person name="Ishii T."/>
            <person name="Kikuchi M."/>
            <person name="Tomii K."/>
            <person name="Kumagai T."/>
            <person name="Yoshimi A."/>
            <person name="Machida M."/>
            <person name="Abe K."/>
            <person name="Shin-ya K."/>
            <person name="Asai K."/>
        </authorList>
    </citation>
    <scope>IDENTIFICATION</scope>
    <scope>FUNCTION</scope>
    <scope>DISRUPTION PHENOTYPE</scope>
    <scope>PATHWAY</scope>
</reference>
<reference key="4">
    <citation type="journal article" date="2018" name="Org. Biomol. Chem.">
        <title>Heterologous production of asperipin-2a: proposal for sequential oxidative macrocyclization by a fungi-specific DUF3328 oxidase.</title>
        <authorList>
            <person name="Ye Y."/>
            <person name="Ozaki T."/>
            <person name="Umemura M."/>
            <person name="Liu C."/>
            <person name="Minami A."/>
            <person name="Oikawa H."/>
        </authorList>
    </citation>
    <scope>FUNCTION</scope>
    <scope>PATHWAY</scope>
</reference>
<protein>
    <recommendedName>
        <fullName evidence="4">Ribosomally synthesized cyclic peptide asperipin-2a precursor aprA</fullName>
    </recommendedName>
    <alternativeName>
        <fullName evidence="4">Asperipin-2a biosynthesis cluster protein A</fullName>
    </alternativeName>
    <component>
        <recommendedName>
            <fullName evidence="4">FYYTGY-I</fullName>
        </recommendedName>
    </component>
    <component>
        <recommendedName>
            <fullName evidence="4">FYYTGY-II</fullName>
        </recommendedName>
    </component>
    <component>
        <recommendedName>
            <fullName evidence="4">FYYTGY-III</fullName>
        </recommendedName>
    </component>
    <component>
        <recommendedName>
            <fullName evidence="4">FYYTGY-IV</fullName>
        </recommendedName>
    </component>
    <component>
        <recommendedName>
            <fullName evidence="4">FYYTGY-V</fullName>
        </recommendedName>
    </component>
    <component>
        <recommendedName>
            <fullName evidence="4">FYYTGY-VI</fullName>
        </recommendedName>
    </component>
    <component>
        <recommendedName>
            <fullName evidence="4">FYYTGY-VII</fullName>
        </recommendedName>
    </component>
    <component>
        <recommendedName>
            <fullName evidence="4">FYYTGY-VIII</fullName>
        </recommendedName>
    </component>
    <component>
        <recommendedName>
            <fullName evidence="4">FYYTGY-IX</fullName>
        </recommendedName>
    </component>
    <component>
        <recommendedName>
            <fullName evidence="4">FYYTGY-X</fullName>
        </recommendedName>
    </component>
    <component>
        <recommendedName>
            <fullName evidence="4">FYYTGY-XI</fullName>
        </recommendedName>
    </component>
</protein>
<comment type="function">
    <text evidence="2 3">Ribosomally synthesized cyclic peptide asperipin-2a precursor; part of the gene cluster that mediates the biosynthesis of the asperipin-2a, a bicyclic peptide that possesses two macrocyclic ether rings consisting of 14- and 17-membered paracyclophans (PubMed:26703898, PubMed:30516224). The aprA translated product contains a 11-fold repeated peptide embedding the hexapeptide Phe-Tyr-Tyr-Thr-Gly-Tyr, that is converted into asperipin-2a (PubMed:30516224). After being excised from the precursor peptide by kexin proteases, the core peptides are cyclized and modified post-translationally by enzymes encoded within the corresponding gene cluster (PubMed:30516224).</text>
</comment>
<comment type="pathway">
    <text evidence="2 3">Secondary metabolite biosynthesis.</text>
</comment>
<comment type="PTM">
    <text evidence="3">AprA is processed by kexin proteases to produce 11 identical copies of the hexapeptide Phe-Tyr-Tyr-Thr-Gly-Tyr, that is further modified aprY and aprR to yield asperipin-2a (PubMed:30516224). The bicyclic structure of asperipin-2a is likely synthesized by the single ustYa family oxidase aprY. The reductase aprR may be required for the final reduction to yield asperipin-2a (PubMed:30516224).</text>
</comment>
<comment type="disruption phenotype">
    <text evidence="2">Abolishes the production of asperipin-2a.</text>
</comment>